<evidence type="ECO:0000250" key="1">
    <source>
        <dbReference type="UniProtKB" id="Q13153"/>
    </source>
</evidence>
<evidence type="ECO:0000250" key="2">
    <source>
        <dbReference type="UniProtKB" id="Q13177"/>
    </source>
</evidence>
<evidence type="ECO:0000255" key="3">
    <source>
        <dbReference type="PROSITE-ProRule" id="PRU00057"/>
    </source>
</evidence>
<evidence type="ECO:0000255" key="4">
    <source>
        <dbReference type="PROSITE-ProRule" id="PRU00159"/>
    </source>
</evidence>
<evidence type="ECO:0000255" key="5">
    <source>
        <dbReference type="PROSITE-ProRule" id="PRU10027"/>
    </source>
</evidence>
<evidence type="ECO:0000256" key="6">
    <source>
        <dbReference type="SAM" id="MobiDB-lite"/>
    </source>
</evidence>
<evidence type="ECO:0000269" key="7">
    <source>
    </source>
</evidence>
<evidence type="ECO:0000305" key="8"/>
<evidence type="ECO:0007744" key="9">
    <source>
    </source>
</evidence>
<evidence type="ECO:0007744" key="10">
    <source>
    </source>
</evidence>
<evidence type="ECO:0007744" key="11">
    <source>
    </source>
</evidence>
<evidence type="ECO:0007744" key="12">
    <source>
    </source>
</evidence>
<comment type="function">
    <text evidence="2 7">Serine/threonine protein kinase that plays a role in a variety of different signaling pathways including cytoskeleton regulation, cell motility, cell cycle progression, apoptosis or proliferation (PubMed:11278362). Acts as a downstream effector of the small GTPases CDC42 and RAC1 (By similarity). Activation by the binding of active CDC42 and RAC1 results in a conformational change and a subsequent autophosphorylation on several serine and/or threonine residues (By similarity). Full-length PAK2 stimulates cell survival and cell growth (By similarity). Phosphorylates MAPK4 and MAPK6 and activates the downstream target MAPKAPK5, a regulator of F-actin polymerization and cell migration (By similarity). Phosphorylates JUN and plays an important role in EGF-induced cell proliferation (By similarity). Phosphorylates many other substrates including histone H4 to promote assembly of H3.3 and H4 into nucleosomes, BAD, ribosomal protein S6, or MBP (PubMed:11278362). Phosphorylates CASP7, thereby preventing its activity (By similarity). Additionally, associates with ARHGEF7 and GIT1 to perform kinase-independent functions such as spindle orientation control during mitosis (By similarity). On the other hand, apoptotic stimuli such as DNA damage lead to caspase-mediated cleavage of PAK2, generating PAK-2p34, an active p34 fragment that translocates to the nucleus and promotes cellular apoptosis involving the JNK signaling pathway (By similarity). Caspase-activated PAK2 phosphorylates MKNK1 and reduces cellular translation (By similarity).</text>
</comment>
<comment type="catalytic activity">
    <reaction evidence="7">
        <text>L-seryl-[protein] + ATP = O-phospho-L-seryl-[protein] + ADP + H(+)</text>
        <dbReference type="Rhea" id="RHEA:17989"/>
        <dbReference type="Rhea" id="RHEA-COMP:9863"/>
        <dbReference type="Rhea" id="RHEA-COMP:11604"/>
        <dbReference type="ChEBI" id="CHEBI:15378"/>
        <dbReference type="ChEBI" id="CHEBI:29999"/>
        <dbReference type="ChEBI" id="CHEBI:30616"/>
        <dbReference type="ChEBI" id="CHEBI:83421"/>
        <dbReference type="ChEBI" id="CHEBI:456216"/>
        <dbReference type="EC" id="2.7.11.1"/>
    </reaction>
    <physiologicalReaction direction="left-to-right" evidence="7">
        <dbReference type="Rhea" id="RHEA:17990"/>
    </physiologicalReaction>
</comment>
<comment type="catalytic activity">
    <reaction evidence="2">
        <text>L-threonyl-[protein] + ATP = O-phospho-L-threonyl-[protein] + ADP + H(+)</text>
        <dbReference type="Rhea" id="RHEA:46608"/>
        <dbReference type="Rhea" id="RHEA-COMP:11060"/>
        <dbReference type="Rhea" id="RHEA-COMP:11605"/>
        <dbReference type="ChEBI" id="CHEBI:15378"/>
        <dbReference type="ChEBI" id="CHEBI:30013"/>
        <dbReference type="ChEBI" id="CHEBI:30616"/>
        <dbReference type="ChEBI" id="CHEBI:61977"/>
        <dbReference type="ChEBI" id="CHEBI:456216"/>
        <dbReference type="EC" id="2.7.11.1"/>
    </reaction>
    <physiologicalReaction direction="left-to-right" evidence="2">
        <dbReference type="Rhea" id="RHEA:46609"/>
    </physiologicalReaction>
</comment>
<comment type="activity regulation">
    <text evidence="2">Activated by binding small G proteins. Binding of GTP-bound CDC42 or RAC1 to the autoregulatory region releases monomers from the autoinhibited dimer, enables phosphorylation of Thr-402 and allows the kinase domain to adopt an active structure. Following caspase cleavage, autophosphorylated PAK-2p34 is constitutively active (By similarity).</text>
</comment>
<comment type="subunit">
    <text evidence="2">Interacts tightly with GTP-bound but not GDP-bound CDC42/p21 and RAC1. Interacts with SH3MD4. Interacts with SCRIB. Interacts with ARHGEF7 and GIT1. PAK-2p34 interacts with ARHGAP10. Interacts with RAC1 (By similarity).</text>
</comment>
<comment type="interaction">
    <interactant intactId="EBI-1559317">
        <id>Q8CIN4</id>
    </interactant>
    <interactant intactId="EBI-5327353">
        <id>P42859</id>
        <label>Htt</label>
    </interactant>
    <organismsDiffer>false</organismsDiffer>
    <experiments>2</experiments>
</comment>
<comment type="subcellular location">
    <molecule>Serine/threonine-protein kinase PAK 2</molecule>
    <subcellularLocation>
        <location evidence="2">Cytoplasm</location>
    </subcellularLocation>
    <subcellularLocation>
        <location evidence="2">Nucleus</location>
    </subcellularLocation>
    <text evidence="2">MYO18A mediates the cellular distribution of the PAK2-ARHGEF7-GIT1 complex to the inner surface of the cell membrane.</text>
</comment>
<comment type="subcellular location">
    <molecule>PAK-2p34</molecule>
    <subcellularLocation>
        <location evidence="2">Nucleus</location>
    </subcellularLocation>
    <subcellularLocation>
        <location evidence="2">Cytoplasm</location>
        <location evidence="2">Perinuclear region</location>
    </subcellularLocation>
    <subcellularLocation>
        <location evidence="2">Membrane</location>
        <topology evidence="2">Lipid-anchor</topology>
    </subcellularLocation>
    <text evidence="2">Interaction with ARHGAP10 probably changes PAK-2p34 location to cytoplasmic perinuclear region. Myristoylation changes PAK-2p34 location to the membrane.</text>
</comment>
<comment type="PTM">
    <text evidence="2">Full-length PAK2 is autophosphorylated when activated by CDC42/p21. Following cleavage, both peptides, PAK-2p27 and PAK-2p34, become highly autophosphorylated. Autophosphorylation of PAK-2p27 can occur in the absence of any effectors and is dependent on phosphorylation of Thr-402, because PAK-2p27 is acting as an exogenous substrate (By similarity).</text>
</comment>
<comment type="PTM">
    <text evidence="2">During apoptosis proteolytically cleaved by caspase-3 or caspase-3-like proteases to yield active PAK-2p34.</text>
</comment>
<comment type="PTM">
    <text evidence="2">Ubiquitinated, leading to its proteasomal degradation.</text>
</comment>
<comment type="similarity">
    <text evidence="8">Belongs to the protein kinase superfamily. STE Ser/Thr protein kinase family. STE20 subfamily.</text>
</comment>
<protein>
    <recommendedName>
        <fullName>Serine/threonine-protein kinase PAK 2</fullName>
        <ecNumber>2.7.11.1</ecNumber>
    </recommendedName>
    <alternativeName>
        <fullName>Gamma-PAK</fullName>
    </alternativeName>
    <alternativeName>
        <fullName>p21-activated kinase 2</fullName>
        <shortName>PAK-2</shortName>
    </alternativeName>
    <component>
        <recommendedName>
            <fullName>PAK-2p27</fullName>
        </recommendedName>
    </component>
    <component>
        <recommendedName>
            <fullName>PAK-2p34</fullName>
        </recommendedName>
    </component>
</protein>
<organism>
    <name type="scientific">Mus musculus</name>
    <name type="common">Mouse</name>
    <dbReference type="NCBI Taxonomy" id="10090"/>
    <lineage>
        <taxon>Eukaryota</taxon>
        <taxon>Metazoa</taxon>
        <taxon>Chordata</taxon>
        <taxon>Craniata</taxon>
        <taxon>Vertebrata</taxon>
        <taxon>Euteleostomi</taxon>
        <taxon>Mammalia</taxon>
        <taxon>Eutheria</taxon>
        <taxon>Euarchontoglires</taxon>
        <taxon>Glires</taxon>
        <taxon>Rodentia</taxon>
        <taxon>Myomorpha</taxon>
        <taxon>Muroidea</taxon>
        <taxon>Muridae</taxon>
        <taxon>Murinae</taxon>
        <taxon>Mus</taxon>
        <taxon>Mus</taxon>
    </lineage>
</organism>
<feature type="initiator methionine" description="Removed" evidence="2">
    <location>
        <position position="1"/>
    </location>
</feature>
<feature type="chain" id="PRO_0000086466" description="Serine/threonine-protein kinase PAK 2">
    <location>
        <begin position="2"/>
        <end position="524"/>
    </location>
</feature>
<feature type="chain" id="PRO_0000304924" description="PAK-2p27" evidence="2">
    <location>
        <begin position="2"/>
        <end position="212"/>
    </location>
</feature>
<feature type="chain" id="PRO_0000304925" description="PAK-2p34" evidence="2">
    <location>
        <begin position="213"/>
        <end position="524"/>
    </location>
</feature>
<feature type="domain" description="CRIB" evidence="3">
    <location>
        <begin position="74"/>
        <end position="87"/>
    </location>
</feature>
<feature type="domain" description="Protein kinase" evidence="4">
    <location>
        <begin position="249"/>
        <end position="499"/>
    </location>
</feature>
<feature type="region of interest" description="Disordered" evidence="6">
    <location>
        <begin position="1"/>
        <end position="81"/>
    </location>
</feature>
<feature type="region of interest" description="Autoregulatory region" evidence="1">
    <location>
        <begin position="69"/>
        <end position="137"/>
    </location>
</feature>
<feature type="region of interest" description="GTPase-binding" evidence="1">
    <location>
        <begin position="69"/>
        <end position="112"/>
    </location>
</feature>
<feature type="region of interest" description="Disordered" evidence="6">
    <location>
        <begin position="142"/>
        <end position="188"/>
    </location>
</feature>
<feature type="region of interest" description="Disordered" evidence="6">
    <location>
        <begin position="204"/>
        <end position="228"/>
    </location>
</feature>
<feature type="short sequence motif" description="Nuclear localization signal" evidence="2">
    <location>
        <begin position="245"/>
        <end position="251"/>
    </location>
</feature>
<feature type="compositionally biased region" description="Basic and acidic residues" evidence="6">
    <location>
        <begin position="67"/>
        <end position="81"/>
    </location>
</feature>
<feature type="compositionally biased region" description="Polar residues" evidence="6">
    <location>
        <begin position="155"/>
        <end position="167"/>
    </location>
</feature>
<feature type="compositionally biased region" description="Acidic residues" evidence="6">
    <location>
        <begin position="169"/>
        <end position="178"/>
    </location>
</feature>
<feature type="active site" description="Proton acceptor" evidence="4 5">
    <location>
        <position position="367"/>
    </location>
</feature>
<feature type="binding site" evidence="4">
    <location>
        <begin position="255"/>
        <end position="263"/>
    </location>
    <ligand>
        <name>ATP</name>
        <dbReference type="ChEBI" id="CHEBI:30616"/>
    </ligand>
</feature>
<feature type="binding site" evidence="4">
    <location>
        <position position="278"/>
    </location>
    <ligand>
        <name>ATP</name>
        <dbReference type="ChEBI" id="CHEBI:30616"/>
    </ligand>
</feature>
<feature type="site" description="Cleavage; by caspase-3 or caspase-3-like proteases" evidence="2">
    <location>
        <begin position="212"/>
        <end position="213"/>
    </location>
</feature>
<feature type="modified residue" description="N-acetylserine" evidence="2">
    <location>
        <position position="2"/>
    </location>
</feature>
<feature type="modified residue" description="Phosphoserine" evidence="2">
    <location>
        <position position="2"/>
    </location>
</feature>
<feature type="modified residue" description="Phosphoserine" evidence="2">
    <location>
        <position position="20"/>
    </location>
</feature>
<feature type="modified residue" description="Phosphoserine" evidence="2">
    <location>
        <position position="55"/>
    </location>
</feature>
<feature type="modified residue" description="Phosphoserine" evidence="2">
    <location>
        <position position="58"/>
    </location>
</feature>
<feature type="modified residue" description="Phosphothreonine" evidence="2">
    <location>
        <position position="60"/>
    </location>
</feature>
<feature type="modified residue" description="N6-acetyllysine" evidence="12">
    <location>
        <position position="62"/>
    </location>
</feature>
<feature type="modified residue" description="Phosphoserine" evidence="2">
    <location>
        <position position="64"/>
    </location>
</feature>
<feature type="modified residue" description="N6-acetyllysine" evidence="2">
    <location>
        <position position="128"/>
    </location>
</feature>
<feature type="modified residue" description="Phosphothreonine" evidence="2">
    <location>
        <position position="134"/>
    </location>
</feature>
<feature type="modified residue" description="Phosphotyrosine" evidence="11">
    <location>
        <position position="139"/>
    </location>
</feature>
<feature type="modified residue" description="Phosphoserine" evidence="9 10 11">
    <location>
        <position position="141"/>
    </location>
</feature>
<feature type="modified residue" description="Phosphothreonine" evidence="11">
    <location>
        <position position="143"/>
    </location>
</feature>
<feature type="modified residue" description="Phosphoserine" evidence="11">
    <location>
        <position position="152"/>
    </location>
</feature>
<feature type="modified residue" description="Phosphothreonine" evidence="2">
    <location>
        <position position="154"/>
    </location>
</feature>
<feature type="modified residue" description="Phosphothreonine" evidence="11">
    <location>
        <position position="159"/>
    </location>
</feature>
<feature type="modified residue" description="Phosphothreonine" evidence="2">
    <location>
        <position position="169"/>
    </location>
</feature>
<feature type="modified residue" description="Phosphoserine" evidence="9 11">
    <location>
        <position position="197"/>
    </location>
</feature>
<feature type="modified residue" description="Phosphothreonine; by autocatalysis" evidence="2">
    <location>
        <position position="402"/>
    </location>
</feature>
<sequence>MSDNGELEDKPPAPPVRMSSTIFSTGGKDPLSANHSLKPLPSVPEEKKPRNKIISIFSGTEKGSKKKEKERPEISPPSDFEHTIHVGFDAVTGEFTGMPEQWARLLQTSNITKLEQKKNPQAVLDVLKFYDSNTVKQKYLSFTPPEKDGFPSGTPALNTKGSETSAVVTEEDDDDEDAAPPVIAPRPDHTKSIYTRSVIDPIPAPVGDSNVDSGAKSSDKQKKKAKMTDEEIMEKLRTIVSIGDPKKKYTRYEKIGQGASGTVFTATDVALGQEVAIKQINLQKQPKKELIINEILVMKELKNPNIVNFLDSYLVGDELFVVMEYLAGGSLTDVVTETCMDEAQIAAVCRECLQALEFLHANQVIHRDIKSDNVLLGMEGSVKLTDFGFCAQITPEQSKRSTMVGTPYWMAPEVVTRKAYGPKVDIWSLGIMAIEMVEGEPPYLNENPLRALYLIATNGTPELQNPEKLSPIFRDFLNRCLEMDVEKRGSAKELLQHPFLKLAKPLSSLTPLILAAKEAMKSNR</sequence>
<gene>
    <name type="primary">Pak2</name>
</gene>
<reference key="1">
    <citation type="journal article" date="2004" name="Mol. Cell. Biol.">
        <title>Negative control of the Myc protein by the stress-responsive kinase Pak2.</title>
        <authorList>
            <person name="Huang Z."/>
            <person name="Traugh J.A."/>
            <person name="Bishop J.M."/>
        </authorList>
    </citation>
    <scope>NUCLEOTIDE SEQUENCE [MRNA]</scope>
    <source>
        <strain>C57BL/6J</strain>
    </source>
</reference>
<reference key="2">
    <citation type="journal article" date="2004" name="Genome Res.">
        <title>The status, quality, and expansion of the NIH full-length cDNA project: the Mammalian Gene Collection (MGC).</title>
        <authorList>
            <consortium name="The MGC Project Team"/>
        </authorList>
    </citation>
    <scope>NUCLEOTIDE SEQUENCE [LARGE SCALE MRNA]</scope>
    <source>
        <strain>C57BL/6J</strain>
        <tissue>Brain</tissue>
    </source>
</reference>
<reference key="3">
    <citation type="journal article" date="2001" name="J. Biol. Chem.">
        <title>p21-activated protein kinase gamma-PAK suppresses programmed cell death of BALB3T3 fibroblasts.</title>
        <authorList>
            <person name="Jakobi R."/>
            <person name="Moertl E."/>
            <person name="Koeppel M.A."/>
        </authorList>
    </citation>
    <scope>FUNCTION IN PHOSPHORYLATION OF BAD</scope>
</reference>
<reference key="4">
    <citation type="journal article" date="2003" name="J. Biol. Chem.">
        <title>Caspase-activated PAK-2 is regulated by subcellular targeting and proteasomal degradation.</title>
        <authorList>
            <person name="Jakobi R."/>
            <person name="McCarthy C.C."/>
            <person name="Koeppel M.A."/>
            <person name="Stringer D.K."/>
        </authorList>
    </citation>
    <scope>SUBCELLULAR LOCATION</scope>
    <scope>CLEAVAGE</scope>
</reference>
<reference key="5">
    <citation type="journal article" date="2007" name="Proc. Natl. Acad. Sci. U.S.A.">
        <title>Large-scale phosphorylation analysis of mouse liver.</title>
        <authorList>
            <person name="Villen J."/>
            <person name="Beausoleil S.A."/>
            <person name="Gerber S.A."/>
            <person name="Gygi S.P."/>
        </authorList>
    </citation>
    <scope>PHOSPHORYLATION [LARGE SCALE ANALYSIS] AT SER-141 AND SER-197</scope>
    <scope>IDENTIFICATION BY MASS SPECTROMETRY [LARGE SCALE ANALYSIS]</scope>
    <source>
        <tissue>Liver</tissue>
    </source>
</reference>
<reference key="6">
    <citation type="journal article" date="2008" name="Hum. Mol. Genet.">
        <title>Scrib regulates PAK activity during the cell migration process.</title>
        <authorList>
            <person name="Nola S."/>
            <person name="Sebbagh M."/>
            <person name="Marchetto S."/>
            <person name="Osmani N."/>
            <person name="Nourry C."/>
            <person name="Audebert S."/>
            <person name="Navarro C."/>
            <person name="Rachel R."/>
            <person name="Montcouquiol M."/>
            <person name="Sans N."/>
            <person name="Etienne-Manneville S."/>
            <person name="Borg J.-P."/>
            <person name="Santoni M.-J."/>
        </authorList>
    </citation>
    <scope>INTERACTION WITH SCRIB</scope>
</reference>
<reference key="7">
    <citation type="journal article" date="2009" name="Mol. Cell. Proteomics">
        <title>Large scale localization of protein phosphorylation by use of electron capture dissociation mass spectrometry.</title>
        <authorList>
            <person name="Sweet S.M."/>
            <person name="Bailey C.M."/>
            <person name="Cunningham D.L."/>
            <person name="Heath J.K."/>
            <person name="Cooper H.J."/>
        </authorList>
    </citation>
    <scope>PHOSPHORYLATION [LARGE SCALE ANALYSIS] AT SER-141</scope>
    <scope>IDENTIFICATION BY MASS SPECTROMETRY [LARGE SCALE ANALYSIS]</scope>
    <source>
        <tissue>Embryonic fibroblast</tissue>
    </source>
</reference>
<reference key="8">
    <citation type="journal article" date="2010" name="Cell">
        <title>A tissue-specific atlas of mouse protein phosphorylation and expression.</title>
        <authorList>
            <person name="Huttlin E.L."/>
            <person name="Jedrychowski M.P."/>
            <person name="Elias J.E."/>
            <person name="Goswami T."/>
            <person name="Rad R."/>
            <person name="Beausoleil S.A."/>
            <person name="Villen J."/>
            <person name="Haas W."/>
            <person name="Sowa M.E."/>
            <person name="Gygi S.P."/>
        </authorList>
    </citation>
    <scope>PHOSPHORYLATION [LARGE SCALE ANALYSIS] AT TYR-139; SER-141; THR-143; SER-152; THR-159 AND SER-197</scope>
    <scope>IDENTIFICATION BY MASS SPECTROMETRY [LARGE SCALE ANALYSIS]</scope>
    <source>
        <tissue>Brain</tissue>
        <tissue>Brown adipose tissue</tissue>
        <tissue>Heart</tissue>
        <tissue>Kidney</tissue>
        <tissue>Liver</tissue>
        <tissue>Lung</tissue>
        <tissue>Pancreas</tissue>
        <tissue>Spleen</tissue>
        <tissue>Testis</tissue>
    </source>
</reference>
<reference key="9">
    <citation type="journal article" date="2013" name="Mol. Cell">
        <title>SIRT5-mediated lysine desuccinylation impacts diverse metabolic pathways.</title>
        <authorList>
            <person name="Park J."/>
            <person name="Chen Y."/>
            <person name="Tishkoff D.X."/>
            <person name="Peng C."/>
            <person name="Tan M."/>
            <person name="Dai L."/>
            <person name="Xie Z."/>
            <person name="Zhang Y."/>
            <person name="Zwaans B.M."/>
            <person name="Skinner M.E."/>
            <person name="Lombard D.B."/>
            <person name="Zhao Y."/>
        </authorList>
    </citation>
    <scope>ACETYLATION [LARGE SCALE ANALYSIS] AT LYS-62</scope>
    <scope>IDENTIFICATION BY MASS SPECTROMETRY [LARGE SCALE ANALYSIS]</scope>
    <source>
        <tissue>Embryonic fibroblast</tissue>
    </source>
</reference>
<keyword id="KW-0007">Acetylation</keyword>
<keyword id="KW-0021">Allosteric enzyme</keyword>
<keyword id="KW-0053">Apoptosis</keyword>
<keyword id="KW-0067">ATP-binding</keyword>
<keyword id="KW-0963">Cytoplasm</keyword>
<keyword id="KW-0341">Growth regulation</keyword>
<keyword id="KW-0418">Kinase</keyword>
<keyword id="KW-0449">Lipoprotein</keyword>
<keyword id="KW-0472">Membrane</keyword>
<keyword id="KW-0547">Nucleotide-binding</keyword>
<keyword id="KW-0539">Nucleus</keyword>
<keyword id="KW-0597">Phosphoprotein</keyword>
<keyword id="KW-1185">Reference proteome</keyword>
<keyword id="KW-0723">Serine/threonine-protein kinase</keyword>
<keyword id="KW-0808">Transferase</keyword>
<keyword id="KW-0832">Ubl conjugation</keyword>
<proteinExistence type="evidence at protein level"/>
<dbReference type="EC" id="2.7.11.1"/>
<dbReference type="EMBL" id="AY167030">
    <property type="protein sequence ID" value="AAN65624.1"/>
    <property type="molecule type" value="mRNA"/>
</dbReference>
<dbReference type="EMBL" id="BC086650">
    <property type="protein sequence ID" value="AAH86650.1"/>
    <property type="molecule type" value="mRNA"/>
</dbReference>
<dbReference type="CCDS" id="CCDS28112.1"/>
<dbReference type="RefSeq" id="NP_796300.1">
    <property type="nucleotide sequence ID" value="NM_177326.3"/>
</dbReference>
<dbReference type="RefSeq" id="XP_006522135.1">
    <property type="nucleotide sequence ID" value="XM_006522072.5"/>
</dbReference>
<dbReference type="SMR" id="Q8CIN4"/>
<dbReference type="BioGRID" id="230244">
    <property type="interactions" value="18"/>
</dbReference>
<dbReference type="DIP" id="DIP-39167N"/>
<dbReference type="FunCoup" id="Q8CIN4">
    <property type="interactions" value="4318"/>
</dbReference>
<dbReference type="IntAct" id="Q8CIN4">
    <property type="interactions" value="6"/>
</dbReference>
<dbReference type="MINT" id="Q8CIN4"/>
<dbReference type="STRING" id="10090.ENSMUSP00000023467"/>
<dbReference type="GlyGen" id="Q8CIN4">
    <property type="glycosylation" value="1 site, 1 O-linked glycan (1 site)"/>
</dbReference>
<dbReference type="iPTMnet" id="Q8CIN4"/>
<dbReference type="PhosphoSitePlus" id="Q8CIN4"/>
<dbReference type="SwissPalm" id="Q8CIN4"/>
<dbReference type="jPOST" id="Q8CIN4"/>
<dbReference type="PaxDb" id="10090-ENSMUSP00000023467"/>
<dbReference type="PeptideAtlas" id="Q8CIN4"/>
<dbReference type="ProteomicsDB" id="287940"/>
<dbReference type="Pumba" id="Q8CIN4"/>
<dbReference type="Antibodypedia" id="3583">
    <property type="antibodies" value="873 antibodies from 43 providers"/>
</dbReference>
<dbReference type="DNASU" id="224105"/>
<dbReference type="Ensembl" id="ENSMUST00000023467.9">
    <property type="protein sequence ID" value="ENSMUSP00000023467.8"/>
    <property type="gene ID" value="ENSMUSG00000022781.9"/>
</dbReference>
<dbReference type="GeneID" id="224105"/>
<dbReference type="KEGG" id="mmu:224105"/>
<dbReference type="UCSC" id="uc007yyd.2">
    <property type="organism name" value="mouse"/>
</dbReference>
<dbReference type="AGR" id="MGI:1339984"/>
<dbReference type="CTD" id="5062"/>
<dbReference type="MGI" id="MGI:1339984">
    <property type="gene designation" value="Pak2"/>
</dbReference>
<dbReference type="VEuPathDB" id="HostDB:ENSMUSG00000022781"/>
<dbReference type="eggNOG" id="KOG0578">
    <property type="taxonomic scope" value="Eukaryota"/>
</dbReference>
<dbReference type="GeneTree" id="ENSGT00950000182988"/>
<dbReference type="HOGENOM" id="CLU_000288_26_6_1"/>
<dbReference type="InParanoid" id="Q8CIN4"/>
<dbReference type="OMA" id="VMMEYLA"/>
<dbReference type="OrthoDB" id="2914378at2759"/>
<dbReference type="PhylomeDB" id="Q8CIN4"/>
<dbReference type="TreeFam" id="TF105351"/>
<dbReference type="Reactome" id="R-MMU-202433">
    <property type="pathway name" value="Generation of second messenger molecules"/>
</dbReference>
<dbReference type="Reactome" id="R-MMU-2871796">
    <property type="pathway name" value="FCERI mediated MAPK activation"/>
</dbReference>
<dbReference type="Reactome" id="R-MMU-389359">
    <property type="pathway name" value="CD28 dependent Vav1 pathway"/>
</dbReference>
<dbReference type="Reactome" id="R-MMU-3928664">
    <property type="pathway name" value="Ephrin signaling"/>
</dbReference>
<dbReference type="Reactome" id="R-MMU-399954">
    <property type="pathway name" value="Sema3A PAK dependent Axon repulsion"/>
</dbReference>
<dbReference type="Reactome" id="R-MMU-4420097">
    <property type="pathway name" value="VEGFA-VEGFR2 Pathway"/>
</dbReference>
<dbReference type="Reactome" id="R-MMU-445355">
    <property type="pathway name" value="Smooth Muscle Contraction"/>
</dbReference>
<dbReference type="Reactome" id="R-MMU-5218920">
    <property type="pathway name" value="VEGFR2 mediated vascular permeability"/>
</dbReference>
<dbReference type="Reactome" id="R-MMU-5621575">
    <property type="pathway name" value="CD209 (DC-SIGN) signaling"/>
</dbReference>
<dbReference type="Reactome" id="R-MMU-5627123">
    <property type="pathway name" value="RHO GTPases activate PAKs"/>
</dbReference>
<dbReference type="Reactome" id="R-MMU-5687128">
    <property type="pathway name" value="MAPK6/MAPK4 signaling"/>
</dbReference>
<dbReference type="Reactome" id="R-MMU-9013149">
    <property type="pathway name" value="RAC1 GTPase cycle"/>
</dbReference>
<dbReference type="Reactome" id="R-MMU-9013404">
    <property type="pathway name" value="RAC2 GTPase cycle"/>
</dbReference>
<dbReference type="Reactome" id="R-MMU-9013406">
    <property type="pathway name" value="RHOQ GTPase cycle"/>
</dbReference>
<dbReference type="Reactome" id="R-MMU-9013407">
    <property type="pathway name" value="RHOH GTPase cycle"/>
</dbReference>
<dbReference type="Reactome" id="R-MMU-9013408">
    <property type="pathway name" value="RHOG GTPase cycle"/>
</dbReference>
<dbReference type="Reactome" id="R-MMU-9013420">
    <property type="pathway name" value="RHOU GTPase cycle"/>
</dbReference>
<dbReference type="Reactome" id="R-MMU-9013423">
    <property type="pathway name" value="RAC3 GTPase cycle"/>
</dbReference>
<dbReference type="Reactome" id="R-MMU-9013424">
    <property type="pathway name" value="RHOV GTPase cycle"/>
</dbReference>
<dbReference type="BioGRID-ORCS" id="224105">
    <property type="hits" value="16 hits in 87 CRISPR screens"/>
</dbReference>
<dbReference type="ChiTaRS" id="Pak2">
    <property type="organism name" value="mouse"/>
</dbReference>
<dbReference type="PRO" id="PR:Q8CIN4"/>
<dbReference type="Proteomes" id="UP000000589">
    <property type="component" value="Chromosome 16"/>
</dbReference>
<dbReference type="RNAct" id="Q8CIN4">
    <property type="molecule type" value="protein"/>
</dbReference>
<dbReference type="Bgee" id="ENSMUSG00000022781">
    <property type="expression patterns" value="Expressed in metanephric ureteric bud and 265 other cell types or tissues"/>
</dbReference>
<dbReference type="GO" id="GO:0005911">
    <property type="term" value="C:cell-cell junction"/>
    <property type="evidence" value="ECO:0007669"/>
    <property type="project" value="Ensembl"/>
</dbReference>
<dbReference type="GO" id="GO:0005829">
    <property type="term" value="C:cytosol"/>
    <property type="evidence" value="ECO:0007669"/>
    <property type="project" value="Ensembl"/>
</dbReference>
<dbReference type="GO" id="GO:0005925">
    <property type="term" value="C:focal adhesion"/>
    <property type="evidence" value="ECO:0007669"/>
    <property type="project" value="Ensembl"/>
</dbReference>
<dbReference type="GO" id="GO:0098978">
    <property type="term" value="C:glutamatergic synapse"/>
    <property type="evidence" value="ECO:0000314"/>
    <property type="project" value="SynGO"/>
</dbReference>
<dbReference type="GO" id="GO:0016020">
    <property type="term" value="C:membrane"/>
    <property type="evidence" value="ECO:0007669"/>
    <property type="project" value="UniProtKB-SubCell"/>
</dbReference>
<dbReference type="GO" id="GO:0016607">
    <property type="term" value="C:nuclear speck"/>
    <property type="evidence" value="ECO:0007669"/>
    <property type="project" value="Ensembl"/>
</dbReference>
<dbReference type="GO" id="GO:0048471">
    <property type="term" value="C:perinuclear region of cytoplasm"/>
    <property type="evidence" value="ECO:0007669"/>
    <property type="project" value="UniProtKB-SubCell"/>
</dbReference>
<dbReference type="GO" id="GO:0014069">
    <property type="term" value="C:postsynaptic density"/>
    <property type="evidence" value="ECO:0000314"/>
    <property type="project" value="SynGO"/>
</dbReference>
<dbReference type="GO" id="GO:0030141">
    <property type="term" value="C:secretory granule"/>
    <property type="evidence" value="ECO:0007669"/>
    <property type="project" value="Ensembl"/>
</dbReference>
<dbReference type="GO" id="GO:0005524">
    <property type="term" value="F:ATP binding"/>
    <property type="evidence" value="ECO:0007669"/>
    <property type="project" value="UniProtKB-KW"/>
</dbReference>
<dbReference type="GO" id="GO:0042802">
    <property type="term" value="F:identical protein binding"/>
    <property type="evidence" value="ECO:0007669"/>
    <property type="project" value="Ensembl"/>
</dbReference>
<dbReference type="GO" id="GO:0004672">
    <property type="term" value="F:protein kinase activity"/>
    <property type="evidence" value="ECO:0000314"/>
    <property type="project" value="MGI"/>
</dbReference>
<dbReference type="GO" id="GO:0019901">
    <property type="term" value="F:protein kinase binding"/>
    <property type="evidence" value="ECO:0007669"/>
    <property type="project" value="Ensembl"/>
</dbReference>
<dbReference type="GO" id="GO:0106310">
    <property type="term" value="F:protein serine kinase activity"/>
    <property type="evidence" value="ECO:0007669"/>
    <property type="project" value="RHEA"/>
</dbReference>
<dbReference type="GO" id="GO:0004674">
    <property type="term" value="F:protein serine/threonine kinase activity"/>
    <property type="evidence" value="ECO:0000314"/>
    <property type="project" value="MGI"/>
</dbReference>
<dbReference type="GO" id="GO:0030296">
    <property type="term" value="F:protein tyrosine kinase activator activity"/>
    <property type="evidence" value="ECO:0007669"/>
    <property type="project" value="Ensembl"/>
</dbReference>
<dbReference type="GO" id="GO:0031267">
    <property type="term" value="F:small GTPase binding"/>
    <property type="evidence" value="ECO:0007669"/>
    <property type="project" value="Ensembl"/>
</dbReference>
<dbReference type="GO" id="GO:0034333">
    <property type="term" value="P:adherens junction assembly"/>
    <property type="evidence" value="ECO:0007669"/>
    <property type="project" value="Ensembl"/>
</dbReference>
<dbReference type="GO" id="GO:0006915">
    <property type="term" value="P:apoptotic process"/>
    <property type="evidence" value="ECO:0007669"/>
    <property type="project" value="UniProtKB-KW"/>
</dbReference>
<dbReference type="GO" id="GO:0070830">
    <property type="term" value="P:bicellular tight junction assembly"/>
    <property type="evidence" value="ECO:0007669"/>
    <property type="project" value="Ensembl"/>
</dbReference>
<dbReference type="GO" id="GO:0003300">
    <property type="term" value="P:cardiac muscle hypertrophy"/>
    <property type="evidence" value="ECO:0007669"/>
    <property type="project" value="Ensembl"/>
</dbReference>
<dbReference type="GO" id="GO:0071560">
    <property type="term" value="P:cellular response to transforming growth factor beta stimulus"/>
    <property type="evidence" value="ECO:0007669"/>
    <property type="project" value="Ensembl"/>
</dbReference>
<dbReference type="GO" id="GO:0060996">
    <property type="term" value="P:dendritic spine development"/>
    <property type="evidence" value="ECO:0000316"/>
    <property type="project" value="MGI"/>
</dbReference>
<dbReference type="GO" id="GO:0035556">
    <property type="term" value="P:intracellular signal transduction"/>
    <property type="evidence" value="ECO:0007669"/>
    <property type="project" value="Ensembl"/>
</dbReference>
<dbReference type="GO" id="GO:0043066">
    <property type="term" value="P:negative regulation of apoptotic process"/>
    <property type="evidence" value="ECO:0007669"/>
    <property type="project" value="Ensembl"/>
</dbReference>
<dbReference type="GO" id="GO:0051497">
    <property type="term" value="P:negative regulation of stress fiber assembly"/>
    <property type="evidence" value="ECO:0007669"/>
    <property type="project" value="Ensembl"/>
</dbReference>
<dbReference type="GO" id="GO:2001238">
    <property type="term" value="P:positive regulation of extrinsic apoptotic signaling pathway"/>
    <property type="evidence" value="ECO:0007669"/>
    <property type="project" value="Ensembl"/>
</dbReference>
<dbReference type="GO" id="GO:0150105">
    <property type="term" value="P:protein localization to cell-cell junction"/>
    <property type="evidence" value="ECO:0007669"/>
    <property type="project" value="Ensembl"/>
</dbReference>
<dbReference type="CDD" id="cd01093">
    <property type="entry name" value="CRIB_PAK_like"/>
    <property type="match status" value="1"/>
</dbReference>
<dbReference type="CDD" id="cd06655">
    <property type="entry name" value="STKc_PAK2"/>
    <property type="match status" value="1"/>
</dbReference>
<dbReference type="FunFam" id="1.10.510.10:FF:000011">
    <property type="entry name" value="Non-specific serine/threonine protein kinase"/>
    <property type="match status" value="1"/>
</dbReference>
<dbReference type="FunFam" id="3.30.200.20:FF:000069">
    <property type="entry name" value="Non-specific serine/threonine protein kinase"/>
    <property type="match status" value="1"/>
</dbReference>
<dbReference type="FunFam" id="3.90.810.10:FF:000001">
    <property type="entry name" value="Non-specific serine/threonine protein kinase"/>
    <property type="match status" value="1"/>
</dbReference>
<dbReference type="Gene3D" id="3.90.810.10">
    <property type="entry name" value="CRIB domain"/>
    <property type="match status" value="1"/>
</dbReference>
<dbReference type="Gene3D" id="3.30.200.20">
    <property type="entry name" value="Phosphorylase Kinase, domain 1"/>
    <property type="match status" value="1"/>
</dbReference>
<dbReference type="Gene3D" id="1.10.510.10">
    <property type="entry name" value="Transferase(Phosphotransferase) domain 1"/>
    <property type="match status" value="1"/>
</dbReference>
<dbReference type="InterPro" id="IPR000095">
    <property type="entry name" value="CRIB_dom"/>
</dbReference>
<dbReference type="InterPro" id="IPR036936">
    <property type="entry name" value="CRIB_dom_sf"/>
</dbReference>
<dbReference type="InterPro" id="IPR011009">
    <property type="entry name" value="Kinase-like_dom_sf"/>
</dbReference>
<dbReference type="InterPro" id="IPR051931">
    <property type="entry name" value="PAK3-like"/>
</dbReference>
<dbReference type="InterPro" id="IPR033923">
    <property type="entry name" value="PAK_BD"/>
</dbReference>
<dbReference type="InterPro" id="IPR000719">
    <property type="entry name" value="Prot_kinase_dom"/>
</dbReference>
<dbReference type="InterPro" id="IPR017441">
    <property type="entry name" value="Protein_kinase_ATP_BS"/>
</dbReference>
<dbReference type="InterPro" id="IPR008271">
    <property type="entry name" value="Ser/Thr_kinase_AS"/>
</dbReference>
<dbReference type="InterPro" id="IPR035064">
    <property type="entry name" value="STK_PAK2"/>
</dbReference>
<dbReference type="PANTHER" id="PTHR45832:SF21">
    <property type="entry name" value="NON-SPECIFIC SERINE_THREONINE PROTEIN KINASE"/>
    <property type="match status" value="1"/>
</dbReference>
<dbReference type="PANTHER" id="PTHR45832">
    <property type="entry name" value="SERINE/THREONINE-PROTEIN KINASE SAMKA-RELATED-RELATED"/>
    <property type="match status" value="1"/>
</dbReference>
<dbReference type="Pfam" id="PF00786">
    <property type="entry name" value="PBD"/>
    <property type="match status" value="1"/>
</dbReference>
<dbReference type="Pfam" id="PF00069">
    <property type="entry name" value="Pkinase"/>
    <property type="match status" value="1"/>
</dbReference>
<dbReference type="SMART" id="SM00285">
    <property type="entry name" value="PBD"/>
    <property type="match status" value="1"/>
</dbReference>
<dbReference type="SMART" id="SM00220">
    <property type="entry name" value="S_TKc"/>
    <property type="match status" value="1"/>
</dbReference>
<dbReference type="SUPFAM" id="SSF56112">
    <property type="entry name" value="Protein kinase-like (PK-like)"/>
    <property type="match status" value="1"/>
</dbReference>
<dbReference type="PROSITE" id="PS50108">
    <property type="entry name" value="CRIB"/>
    <property type="match status" value="1"/>
</dbReference>
<dbReference type="PROSITE" id="PS00107">
    <property type="entry name" value="PROTEIN_KINASE_ATP"/>
    <property type="match status" value="1"/>
</dbReference>
<dbReference type="PROSITE" id="PS50011">
    <property type="entry name" value="PROTEIN_KINASE_DOM"/>
    <property type="match status" value="1"/>
</dbReference>
<dbReference type="PROSITE" id="PS00108">
    <property type="entry name" value="PROTEIN_KINASE_ST"/>
    <property type="match status" value="1"/>
</dbReference>
<accession>Q8CIN4</accession>
<name>PAK2_MOUSE</name>